<gene>
    <name evidence="1" type="primary">rpoA</name>
    <name type="ordered locus">BUsg_480</name>
</gene>
<accession>O69232</accession>
<proteinExistence type="inferred from homology"/>
<keyword id="KW-0240">DNA-directed RNA polymerase</keyword>
<keyword id="KW-0548">Nucleotidyltransferase</keyword>
<keyword id="KW-0804">Transcription</keyword>
<keyword id="KW-0808">Transferase</keyword>
<protein>
    <recommendedName>
        <fullName evidence="1">DNA-directed RNA polymerase subunit alpha</fullName>
        <shortName evidence="1">RNAP subunit alpha</shortName>
        <ecNumber evidence="1">2.7.7.6</ecNumber>
    </recommendedName>
    <alternativeName>
        <fullName evidence="1">RNA polymerase subunit alpha</fullName>
    </alternativeName>
    <alternativeName>
        <fullName evidence="1">Transcriptase subunit alpha</fullName>
    </alternativeName>
</protein>
<evidence type="ECO:0000255" key="1">
    <source>
        <dbReference type="HAMAP-Rule" id="MF_00059"/>
    </source>
</evidence>
<dbReference type="EC" id="2.7.7.6" evidence="1"/>
<dbReference type="EMBL" id="AE013218">
    <property type="protein sequence ID" value="AAM68023.1"/>
    <property type="molecule type" value="Genomic_DNA"/>
</dbReference>
<dbReference type="EMBL" id="M74510">
    <property type="protein sequence ID" value="AAC05400.1"/>
    <property type="molecule type" value="Genomic_DNA"/>
</dbReference>
<dbReference type="RefSeq" id="WP_011053989.1">
    <property type="nucleotide sequence ID" value="NC_004061.1"/>
</dbReference>
<dbReference type="SMR" id="O69232"/>
<dbReference type="STRING" id="198804.BUsg_480"/>
<dbReference type="GeneID" id="93003955"/>
<dbReference type="KEGG" id="bas:BUsg_480"/>
<dbReference type="eggNOG" id="COG0202">
    <property type="taxonomic scope" value="Bacteria"/>
</dbReference>
<dbReference type="HOGENOM" id="CLU_053084_0_0_6"/>
<dbReference type="Proteomes" id="UP000000416">
    <property type="component" value="Chromosome"/>
</dbReference>
<dbReference type="GO" id="GO:0005737">
    <property type="term" value="C:cytoplasm"/>
    <property type="evidence" value="ECO:0007669"/>
    <property type="project" value="UniProtKB-ARBA"/>
</dbReference>
<dbReference type="GO" id="GO:0000428">
    <property type="term" value="C:DNA-directed RNA polymerase complex"/>
    <property type="evidence" value="ECO:0007669"/>
    <property type="project" value="UniProtKB-KW"/>
</dbReference>
<dbReference type="GO" id="GO:0003677">
    <property type="term" value="F:DNA binding"/>
    <property type="evidence" value="ECO:0007669"/>
    <property type="project" value="UniProtKB-UniRule"/>
</dbReference>
<dbReference type="GO" id="GO:0003899">
    <property type="term" value="F:DNA-directed RNA polymerase activity"/>
    <property type="evidence" value="ECO:0007669"/>
    <property type="project" value="UniProtKB-UniRule"/>
</dbReference>
<dbReference type="GO" id="GO:0046983">
    <property type="term" value="F:protein dimerization activity"/>
    <property type="evidence" value="ECO:0007669"/>
    <property type="project" value="InterPro"/>
</dbReference>
<dbReference type="GO" id="GO:0006351">
    <property type="term" value="P:DNA-templated transcription"/>
    <property type="evidence" value="ECO:0007669"/>
    <property type="project" value="UniProtKB-UniRule"/>
</dbReference>
<dbReference type="CDD" id="cd06928">
    <property type="entry name" value="RNAP_alpha_NTD"/>
    <property type="match status" value="1"/>
</dbReference>
<dbReference type="FunFam" id="1.10.150.20:FF:000001">
    <property type="entry name" value="DNA-directed RNA polymerase subunit alpha"/>
    <property type="match status" value="1"/>
</dbReference>
<dbReference type="FunFam" id="2.170.120.12:FF:000001">
    <property type="entry name" value="DNA-directed RNA polymerase subunit alpha"/>
    <property type="match status" value="1"/>
</dbReference>
<dbReference type="Gene3D" id="1.10.150.20">
    <property type="entry name" value="5' to 3' exonuclease, C-terminal subdomain"/>
    <property type="match status" value="1"/>
</dbReference>
<dbReference type="Gene3D" id="2.170.120.12">
    <property type="entry name" value="DNA-directed RNA polymerase, insert domain"/>
    <property type="match status" value="1"/>
</dbReference>
<dbReference type="Gene3D" id="3.30.1360.10">
    <property type="entry name" value="RNA polymerase, RBP11-like subunit"/>
    <property type="match status" value="1"/>
</dbReference>
<dbReference type="HAMAP" id="MF_00059">
    <property type="entry name" value="RNApol_bact_RpoA"/>
    <property type="match status" value="1"/>
</dbReference>
<dbReference type="InterPro" id="IPR011262">
    <property type="entry name" value="DNA-dir_RNA_pol_insert"/>
</dbReference>
<dbReference type="InterPro" id="IPR011263">
    <property type="entry name" value="DNA-dir_RNA_pol_RpoA/D/Rpb3"/>
</dbReference>
<dbReference type="InterPro" id="IPR011773">
    <property type="entry name" value="DNA-dir_RpoA"/>
</dbReference>
<dbReference type="InterPro" id="IPR036603">
    <property type="entry name" value="RBP11-like"/>
</dbReference>
<dbReference type="InterPro" id="IPR011260">
    <property type="entry name" value="RNAP_asu_C"/>
</dbReference>
<dbReference type="InterPro" id="IPR036643">
    <property type="entry name" value="RNApol_insert_sf"/>
</dbReference>
<dbReference type="NCBIfam" id="NF003513">
    <property type="entry name" value="PRK05182.1-2"/>
    <property type="match status" value="1"/>
</dbReference>
<dbReference type="NCBIfam" id="NF003519">
    <property type="entry name" value="PRK05182.2-5"/>
    <property type="match status" value="1"/>
</dbReference>
<dbReference type="NCBIfam" id="TIGR02027">
    <property type="entry name" value="rpoA"/>
    <property type="match status" value="1"/>
</dbReference>
<dbReference type="Pfam" id="PF01000">
    <property type="entry name" value="RNA_pol_A_bac"/>
    <property type="match status" value="1"/>
</dbReference>
<dbReference type="Pfam" id="PF03118">
    <property type="entry name" value="RNA_pol_A_CTD"/>
    <property type="match status" value="1"/>
</dbReference>
<dbReference type="Pfam" id="PF01193">
    <property type="entry name" value="RNA_pol_L"/>
    <property type="match status" value="1"/>
</dbReference>
<dbReference type="SMART" id="SM00662">
    <property type="entry name" value="RPOLD"/>
    <property type="match status" value="1"/>
</dbReference>
<dbReference type="SUPFAM" id="SSF47789">
    <property type="entry name" value="C-terminal domain of RNA polymerase alpha subunit"/>
    <property type="match status" value="1"/>
</dbReference>
<dbReference type="SUPFAM" id="SSF56553">
    <property type="entry name" value="Insert subdomain of RNA polymerase alpha subunit"/>
    <property type="match status" value="1"/>
</dbReference>
<dbReference type="SUPFAM" id="SSF55257">
    <property type="entry name" value="RBP11-like subunits of RNA polymerase"/>
    <property type="match status" value="1"/>
</dbReference>
<name>RPOA_BUCAP</name>
<sequence length="329" mass="36940">MQNSIIGFLKPRLVEIEQITATHTKVTLEPLERGFGHTLGNALRRILLSSMPGYAVTEVEIDGVLHEYSTKEGVQEDILEILLNLKELAVKVHGKDEVFMSLNKSGIGSVTASDIIHDGDVEIIKPDHLICHLTDENASIQMRIKVQRGRGYIPASSRIHMEDDLRPIGCLLVDACYSPINRISYNVEAARVEQRTDLDKLIIEMKTNGTIDPEEAIRRAATILSEQLEAFVDLRDVKEPEIKEEKPEFEPILLRPVDDLELTVRSANCLKAESIHYIGDLVQRTEVELLKTPNLGKKSLTEIKDILAARNLSLGMKLEKWPPSSILEE</sequence>
<reference key="1">
    <citation type="journal article" date="2002" name="Science">
        <title>50 million years of genomic stasis in endosymbiotic bacteria.</title>
        <authorList>
            <person name="Tamas I."/>
            <person name="Klasson L."/>
            <person name="Canbaeck B."/>
            <person name="Naeslund A.K."/>
            <person name="Eriksson A.-S."/>
            <person name="Wernegreen J.J."/>
            <person name="Sandstroem J.P."/>
            <person name="Moran N.A."/>
            <person name="Andersson S.G.E."/>
        </authorList>
    </citation>
    <scope>NUCLEOTIDE SEQUENCE [LARGE SCALE GENOMIC DNA]</scope>
    <source>
        <strain>Sg</strain>
    </source>
</reference>
<reference key="2">
    <citation type="journal article" date="1992" name="Curr. Microbiol.">
        <title>Buchnera aphidicola, the endosymbiont of aphids, contains genes for four ribosomal RNA proteins, initiation factor-3, and the alpha subunit of RNA polymerase.</title>
        <authorList>
            <person name="Munson M.A."/>
            <person name="Baumann L."/>
            <person name="Baumann P."/>
        </authorList>
    </citation>
    <scope>NUCLEOTIDE SEQUENCE [GENOMIC DNA] OF 1-113</scope>
</reference>
<feature type="chain" id="PRO_0000175280" description="DNA-directed RNA polymerase subunit alpha">
    <location>
        <begin position="1"/>
        <end position="329"/>
    </location>
</feature>
<feature type="region of interest" description="Alpha N-terminal domain (alpha-NTD)" evidence="1">
    <location>
        <begin position="1"/>
        <end position="235"/>
    </location>
</feature>
<feature type="region of interest" description="Alpha C-terminal domain (alpha-CTD)" evidence="1">
    <location>
        <begin position="249"/>
        <end position="329"/>
    </location>
</feature>
<comment type="function">
    <text evidence="1">DNA-dependent RNA polymerase catalyzes the transcription of DNA into RNA using the four ribonucleoside triphosphates as substrates.</text>
</comment>
<comment type="catalytic activity">
    <reaction evidence="1">
        <text>RNA(n) + a ribonucleoside 5'-triphosphate = RNA(n+1) + diphosphate</text>
        <dbReference type="Rhea" id="RHEA:21248"/>
        <dbReference type="Rhea" id="RHEA-COMP:14527"/>
        <dbReference type="Rhea" id="RHEA-COMP:17342"/>
        <dbReference type="ChEBI" id="CHEBI:33019"/>
        <dbReference type="ChEBI" id="CHEBI:61557"/>
        <dbReference type="ChEBI" id="CHEBI:140395"/>
        <dbReference type="EC" id="2.7.7.6"/>
    </reaction>
</comment>
<comment type="subunit">
    <text evidence="1">Homodimer. The RNAP catalytic core consists of 2 alpha, 1 beta, 1 beta' and 1 omega subunit. When a sigma factor is associated with the core the holoenzyme is formed, which can initiate transcription.</text>
</comment>
<comment type="domain">
    <text evidence="1">The N-terminal domain is essential for RNAP assembly and basal transcription, whereas the C-terminal domain is involved in interaction with transcriptional regulators and with upstream promoter elements.</text>
</comment>
<comment type="similarity">
    <text evidence="1">Belongs to the RNA polymerase alpha chain family.</text>
</comment>
<organism>
    <name type="scientific">Buchnera aphidicola subsp. Schizaphis graminum (strain Sg)</name>
    <dbReference type="NCBI Taxonomy" id="198804"/>
    <lineage>
        <taxon>Bacteria</taxon>
        <taxon>Pseudomonadati</taxon>
        <taxon>Pseudomonadota</taxon>
        <taxon>Gammaproteobacteria</taxon>
        <taxon>Enterobacterales</taxon>
        <taxon>Erwiniaceae</taxon>
        <taxon>Buchnera</taxon>
    </lineage>
</organism>